<feature type="chain" id="PRO_0000308053" description="Large ribosomal subunit protein uL1">
    <location>
        <begin position="1"/>
        <end position="235"/>
    </location>
</feature>
<organism>
    <name type="scientific">Mycobacterium sp. (strain KMS)</name>
    <dbReference type="NCBI Taxonomy" id="189918"/>
    <lineage>
        <taxon>Bacteria</taxon>
        <taxon>Bacillati</taxon>
        <taxon>Actinomycetota</taxon>
        <taxon>Actinomycetes</taxon>
        <taxon>Mycobacteriales</taxon>
        <taxon>Mycobacteriaceae</taxon>
        <taxon>Mycobacterium</taxon>
    </lineage>
</organism>
<sequence>MSKNSKAYREAAEKVDKTKLYSPLEAAKLAKETSSKKQDATVEVAIRLGVDPRKADQMVRGTVNLPHGTGKTARVAVFAVGDKAEQAAAAGADIVGSDDLIEQIQGGMLDFDAAIATPDQMAKVGRIARILGPRGLMPNPKTGTVTADVAKAVSDIKGGKINFRVDKQANLHIVIGKASFDEKKLAENYGAALDEILRAKPSASKGRYLKKIVVSTTTGPGIPVDPQVTRNFAEA</sequence>
<reference key="1">
    <citation type="submission" date="2006-12" db="EMBL/GenBank/DDBJ databases">
        <title>Complete sequence of chromosome of Mycobacterium sp. KMS.</title>
        <authorList>
            <consortium name="US DOE Joint Genome Institute"/>
            <person name="Copeland A."/>
            <person name="Lucas S."/>
            <person name="Lapidus A."/>
            <person name="Barry K."/>
            <person name="Detter J.C."/>
            <person name="Glavina del Rio T."/>
            <person name="Hammon N."/>
            <person name="Israni S."/>
            <person name="Dalin E."/>
            <person name="Tice H."/>
            <person name="Pitluck S."/>
            <person name="Kiss H."/>
            <person name="Brettin T."/>
            <person name="Bruce D."/>
            <person name="Han C."/>
            <person name="Tapia R."/>
            <person name="Gilna P."/>
            <person name="Schmutz J."/>
            <person name="Larimer F."/>
            <person name="Land M."/>
            <person name="Hauser L."/>
            <person name="Kyrpides N."/>
            <person name="Mikhailova N."/>
            <person name="Miller C.D."/>
            <person name="Richardson P."/>
        </authorList>
    </citation>
    <scope>NUCLEOTIDE SEQUENCE [LARGE SCALE GENOMIC DNA]</scope>
    <source>
        <strain>KMS</strain>
    </source>
</reference>
<dbReference type="EMBL" id="CP000518">
    <property type="protein sequence ID" value="ABL90155.1"/>
    <property type="molecule type" value="Genomic_DNA"/>
</dbReference>
<dbReference type="SMR" id="A1UBE7"/>
<dbReference type="STRING" id="189918.Mkms_0941"/>
<dbReference type="KEGG" id="mkm:Mkms_0941"/>
<dbReference type="HOGENOM" id="CLU_062853_0_0_11"/>
<dbReference type="OrthoDB" id="9803740at2"/>
<dbReference type="GO" id="GO:0015934">
    <property type="term" value="C:large ribosomal subunit"/>
    <property type="evidence" value="ECO:0007669"/>
    <property type="project" value="InterPro"/>
</dbReference>
<dbReference type="GO" id="GO:0019843">
    <property type="term" value="F:rRNA binding"/>
    <property type="evidence" value="ECO:0007669"/>
    <property type="project" value="UniProtKB-UniRule"/>
</dbReference>
<dbReference type="GO" id="GO:0003735">
    <property type="term" value="F:structural constituent of ribosome"/>
    <property type="evidence" value="ECO:0007669"/>
    <property type="project" value="InterPro"/>
</dbReference>
<dbReference type="GO" id="GO:0000049">
    <property type="term" value="F:tRNA binding"/>
    <property type="evidence" value="ECO:0007669"/>
    <property type="project" value="UniProtKB-KW"/>
</dbReference>
<dbReference type="GO" id="GO:0006417">
    <property type="term" value="P:regulation of translation"/>
    <property type="evidence" value="ECO:0007669"/>
    <property type="project" value="UniProtKB-KW"/>
</dbReference>
<dbReference type="GO" id="GO:0006412">
    <property type="term" value="P:translation"/>
    <property type="evidence" value="ECO:0007669"/>
    <property type="project" value="UniProtKB-UniRule"/>
</dbReference>
<dbReference type="CDD" id="cd00403">
    <property type="entry name" value="Ribosomal_L1"/>
    <property type="match status" value="1"/>
</dbReference>
<dbReference type="FunFam" id="3.40.50.790:FF:000001">
    <property type="entry name" value="50S ribosomal protein L1"/>
    <property type="match status" value="1"/>
</dbReference>
<dbReference type="Gene3D" id="3.30.190.20">
    <property type="match status" value="1"/>
</dbReference>
<dbReference type="Gene3D" id="3.40.50.790">
    <property type="match status" value="1"/>
</dbReference>
<dbReference type="HAMAP" id="MF_01318_B">
    <property type="entry name" value="Ribosomal_uL1_B"/>
    <property type="match status" value="1"/>
</dbReference>
<dbReference type="InterPro" id="IPR005878">
    <property type="entry name" value="Ribosom_uL1_bac-type"/>
</dbReference>
<dbReference type="InterPro" id="IPR002143">
    <property type="entry name" value="Ribosomal_uL1"/>
</dbReference>
<dbReference type="InterPro" id="IPR023674">
    <property type="entry name" value="Ribosomal_uL1-like"/>
</dbReference>
<dbReference type="InterPro" id="IPR028364">
    <property type="entry name" value="Ribosomal_uL1/biogenesis"/>
</dbReference>
<dbReference type="InterPro" id="IPR016095">
    <property type="entry name" value="Ribosomal_uL1_3-a/b-sand"/>
</dbReference>
<dbReference type="InterPro" id="IPR023673">
    <property type="entry name" value="Ribosomal_uL1_CS"/>
</dbReference>
<dbReference type="NCBIfam" id="TIGR01169">
    <property type="entry name" value="rplA_bact"/>
    <property type="match status" value="1"/>
</dbReference>
<dbReference type="PANTHER" id="PTHR36427">
    <property type="entry name" value="54S RIBOSOMAL PROTEIN L1, MITOCHONDRIAL"/>
    <property type="match status" value="1"/>
</dbReference>
<dbReference type="PANTHER" id="PTHR36427:SF3">
    <property type="entry name" value="LARGE RIBOSOMAL SUBUNIT PROTEIN UL1M"/>
    <property type="match status" value="1"/>
</dbReference>
<dbReference type="Pfam" id="PF00687">
    <property type="entry name" value="Ribosomal_L1"/>
    <property type="match status" value="1"/>
</dbReference>
<dbReference type="PIRSF" id="PIRSF002155">
    <property type="entry name" value="Ribosomal_L1"/>
    <property type="match status" value="1"/>
</dbReference>
<dbReference type="SUPFAM" id="SSF56808">
    <property type="entry name" value="Ribosomal protein L1"/>
    <property type="match status" value="1"/>
</dbReference>
<dbReference type="PROSITE" id="PS01199">
    <property type="entry name" value="RIBOSOMAL_L1"/>
    <property type="match status" value="1"/>
</dbReference>
<keyword id="KW-0678">Repressor</keyword>
<keyword id="KW-0687">Ribonucleoprotein</keyword>
<keyword id="KW-0689">Ribosomal protein</keyword>
<keyword id="KW-0694">RNA-binding</keyword>
<keyword id="KW-0699">rRNA-binding</keyword>
<keyword id="KW-0810">Translation regulation</keyword>
<keyword id="KW-0820">tRNA-binding</keyword>
<name>RL1_MYCSK</name>
<proteinExistence type="inferred from homology"/>
<gene>
    <name evidence="1" type="primary">rplA</name>
    <name type="ordered locus">Mkms_0941</name>
</gene>
<accession>A1UBE7</accession>
<comment type="function">
    <text evidence="1">Binds directly to 23S rRNA. The L1 stalk is quite mobile in the ribosome, and is involved in E site tRNA release.</text>
</comment>
<comment type="function">
    <text evidence="1">Protein L1 is also a translational repressor protein, it controls the translation of the L11 operon by binding to its mRNA.</text>
</comment>
<comment type="subunit">
    <text evidence="1">Part of the 50S ribosomal subunit.</text>
</comment>
<comment type="similarity">
    <text evidence="1">Belongs to the universal ribosomal protein uL1 family.</text>
</comment>
<protein>
    <recommendedName>
        <fullName evidence="1">Large ribosomal subunit protein uL1</fullName>
    </recommendedName>
    <alternativeName>
        <fullName evidence="2">50S ribosomal protein L1</fullName>
    </alternativeName>
</protein>
<evidence type="ECO:0000255" key="1">
    <source>
        <dbReference type="HAMAP-Rule" id="MF_01318"/>
    </source>
</evidence>
<evidence type="ECO:0000305" key="2"/>